<keyword id="KW-1185">Reference proteome</keyword>
<keyword id="KW-0687">Ribonucleoprotein</keyword>
<keyword id="KW-0689">Ribosomal protein</keyword>
<organism>
    <name type="scientific">Shewanella oneidensis (strain ATCC 700550 / JCM 31522 / CIP 106686 / LMG 19005 / NCIMB 14063 / MR-1)</name>
    <dbReference type="NCBI Taxonomy" id="211586"/>
    <lineage>
        <taxon>Bacteria</taxon>
        <taxon>Pseudomonadati</taxon>
        <taxon>Pseudomonadota</taxon>
        <taxon>Gammaproteobacteria</taxon>
        <taxon>Alteromonadales</taxon>
        <taxon>Shewanellaceae</taxon>
        <taxon>Shewanella</taxon>
    </lineage>
</organism>
<reference key="1">
    <citation type="journal article" date="2002" name="Nat. Biotechnol.">
        <title>Genome sequence of the dissimilatory metal ion-reducing bacterium Shewanella oneidensis.</title>
        <authorList>
            <person name="Heidelberg J.F."/>
            <person name="Paulsen I.T."/>
            <person name="Nelson K.E."/>
            <person name="Gaidos E.J."/>
            <person name="Nelson W.C."/>
            <person name="Read T.D."/>
            <person name="Eisen J.A."/>
            <person name="Seshadri R."/>
            <person name="Ward N.L."/>
            <person name="Methe B.A."/>
            <person name="Clayton R.A."/>
            <person name="Meyer T."/>
            <person name="Tsapin A."/>
            <person name="Scott J."/>
            <person name="Beanan M.J."/>
            <person name="Brinkac L.M."/>
            <person name="Daugherty S.C."/>
            <person name="DeBoy R.T."/>
            <person name="Dodson R.J."/>
            <person name="Durkin A.S."/>
            <person name="Haft D.H."/>
            <person name="Kolonay J.F."/>
            <person name="Madupu R."/>
            <person name="Peterson J.D."/>
            <person name="Umayam L.A."/>
            <person name="White O."/>
            <person name="Wolf A.M."/>
            <person name="Vamathevan J.J."/>
            <person name="Weidman J.F."/>
            <person name="Impraim M."/>
            <person name="Lee K."/>
            <person name="Berry K.J."/>
            <person name="Lee C."/>
            <person name="Mueller J."/>
            <person name="Khouri H.M."/>
            <person name="Gill J."/>
            <person name="Utterback T.R."/>
            <person name="McDonald L.A."/>
            <person name="Feldblyum T.V."/>
            <person name="Smith H.O."/>
            <person name="Venter J.C."/>
            <person name="Nealson K.H."/>
            <person name="Fraser C.M."/>
        </authorList>
    </citation>
    <scope>NUCLEOTIDE SEQUENCE [LARGE SCALE GENOMIC DNA]</scope>
    <source>
        <strain>ATCC 700550 / JCM 31522 / CIP 106686 / LMG 19005 / NCIMB 14063 / MR-1</strain>
    </source>
</reference>
<evidence type="ECO:0000255" key="1">
    <source>
        <dbReference type="HAMAP-Rule" id="MF_00374"/>
    </source>
</evidence>
<evidence type="ECO:0000305" key="2"/>
<dbReference type="EMBL" id="AE014299">
    <property type="protein sequence ID" value="AAN53324.1"/>
    <property type="molecule type" value="Genomic_DNA"/>
</dbReference>
<dbReference type="RefSeq" id="NP_715879.1">
    <property type="nucleotide sequence ID" value="NC_004347.2"/>
</dbReference>
<dbReference type="RefSeq" id="WP_007644429.1">
    <property type="nucleotide sequence ID" value="NZ_CP053946.1"/>
</dbReference>
<dbReference type="SMR" id="Q8EK61"/>
<dbReference type="STRING" id="211586.SO_0239"/>
<dbReference type="PaxDb" id="211586-SO_0239"/>
<dbReference type="GeneID" id="94726194"/>
<dbReference type="KEGG" id="son:SO_0239"/>
<dbReference type="PATRIC" id="fig|211586.12.peg.227"/>
<dbReference type="eggNOG" id="COG0255">
    <property type="taxonomic scope" value="Bacteria"/>
</dbReference>
<dbReference type="HOGENOM" id="CLU_158491_1_2_6"/>
<dbReference type="OrthoDB" id="9815192at2"/>
<dbReference type="PhylomeDB" id="Q8EK61"/>
<dbReference type="BioCyc" id="SONE211586:G1GMP-228-MONOMER"/>
<dbReference type="Proteomes" id="UP000008186">
    <property type="component" value="Chromosome"/>
</dbReference>
<dbReference type="GO" id="GO:0022625">
    <property type="term" value="C:cytosolic large ribosomal subunit"/>
    <property type="evidence" value="ECO:0000318"/>
    <property type="project" value="GO_Central"/>
</dbReference>
<dbReference type="GO" id="GO:0003735">
    <property type="term" value="F:structural constituent of ribosome"/>
    <property type="evidence" value="ECO:0007669"/>
    <property type="project" value="InterPro"/>
</dbReference>
<dbReference type="GO" id="GO:0006412">
    <property type="term" value="P:translation"/>
    <property type="evidence" value="ECO:0007669"/>
    <property type="project" value="UniProtKB-UniRule"/>
</dbReference>
<dbReference type="CDD" id="cd00427">
    <property type="entry name" value="Ribosomal_L29_HIP"/>
    <property type="match status" value="1"/>
</dbReference>
<dbReference type="FunFam" id="1.10.287.310:FF:000001">
    <property type="entry name" value="50S ribosomal protein L29"/>
    <property type="match status" value="1"/>
</dbReference>
<dbReference type="Gene3D" id="1.10.287.310">
    <property type="match status" value="1"/>
</dbReference>
<dbReference type="HAMAP" id="MF_00374">
    <property type="entry name" value="Ribosomal_uL29"/>
    <property type="match status" value="1"/>
</dbReference>
<dbReference type="InterPro" id="IPR050063">
    <property type="entry name" value="Ribosomal_protein_uL29"/>
</dbReference>
<dbReference type="InterPro" id="IPR001854">
    <property type="entry name" value="Ribosomal_uL29"/>
</dbReference>
<dbReference type="InterPro" id="IPR018254">
    <property type="entry name" value="Ribosomal_uL29_CS"/>
</dbReference>
<dbReference type="InterPro" id="IPR036049">
    <property type="entry name" value="Ribosomal_uL29_sf"/>
</dbReference>
<dbReference type="NCBIfam" id="TIGR00012">
    <property type="entry name" value="L29"/>
    <property type="match status" value="1"/>
</dbReference>
<dbReference type="PANTHER" id="PTHR10916">
    <property type="entry name" value="60S RIBOSOMAL PROTEIN L35/50S RIBOSOMAL PROTEIN L29"/>
    <property type="match status" value="1"/>
</dbReference>
<dbReference type="PANTHER" id="PTHR10916:SF0">
    <property type="entry name" value="LARGE RIBOSOMAL SUBUNIT PROTEIN UL29C"/>
    <property type="match status" value="1"/>
</dbReference>
<dbReference type="Pfam" id="PF00831">
    <property type="entry name" value="Ribosomal_L29"/>
    <property type="match status" value="1"/>
</dbReference>
<dbReference type="SUPFAM" id="SSF46561">
    <property type="entry name" value="Ribosomal protein L29 (L29p)"/>
    <property type="match status" value="1"/>
</dbReference>
<dbReference type="PROSITE" id="PS00579">
    <property type="entry name" value="RIBOSOMAL_L29"/>
    <property type="match status" value="1"/>
</dbReference>
<name>RL29_SHEON</name>
<proteinExistence type="inferred from homology"/>
<gene>
    <name evidence="1" type="primary">rpmC</name>
    <name type="ordered locus">SO_0239</name>
</gene>
<comment type="similarity">
    <text evidence="1">Belongs to the universal ribosomal protein uL29 family.</text>
</comment>
<protein>
    <recommendedName>
        <fullName evidence="1">Large ribosomal subunit protein uL29</fullName>
    </recommendedName>
    <alternativeName>
        <fullName evidence="2">50S ribosomal protein L29</fullName>
    </alternativeName>
</protein>
<feature type="chain" id="PRO_0000130451" description="Large ribosomal subunit protein uL29">
    <location>
        <begin position="1"/>
        <end position="63"/>
    </location>
</feature>
<sequence>MKASELREKSVEELNAELLGLLREQFNLRMQHATGQLTQTHQLKLVRRNIARVKTIITSKAGA</sequence>
<accession>Q8EK61</accession>